<sequence length="693" mass="75172">MLKLFSAFRKDRIWDFDGGIHPPEMKTQSSQTPLRQISLPEQFIIPLKQHLGPEGEICVSVGDKVLRGQPLTRGKGRTLPVHAPTSGTVNAIRQHTTAHPSGLSELSIIIVPDGEDRWCERLTYRDYRAQSVDTLLAHLHQAGIAGLGGAGFPTAAKLQGGMRGIETLIINGAECEPYITADDRLMQECADEIIQGVEILSFLLQPKRILIGIEDNKPEAISALRLALGKRSDMQLRVIPTKYPSGGAKQLTKILTGKEVPFGKHSAAIGVLMQNVGTAYAIKRAVIDGEPLTERVVTLTGEALRQPGNVWARLGTPVRHLLKQGGFHVTKQPMVVMGGPLMGFTLPLLDVPIVKISNCLLAPSHSEMEPVAEEQSCIRCSKCADACPAGLLPQQLYWFSRGQEHEKARDHHLFDCIECGACAYVCPSNIPLVQYYRQEKAEIRAIDEDAQRAALAKVRFDAKQARLEREKAARELRHKQAAAGVSTSDKDAVQAALERVRRKQTAEAEIGSPITVIPDAQPDNSAAIAARAAHKALVREERVREKQSQQETPATEVTPEELDPRKAAVAAALARVKARKAAQQSELNTTESVSSAIPDTAAEPIAVVEAQEQEDPRKAAVAAAIARVKARKAAQQLVTNVEAAVPVVTETTAEPIAVVEVQEPEDPRKAAVAAAIARVKARKAAQASSYQEE</sequence>
<gene>
    <name evidence="1" type="primary">rnfC</name>
    <name type="ordered locus">ECA2278</name>
</gene>
<feature type="chain" id="PRO_1000013606" description="Ion-translocating oxidoreductase complex subunit C">
    <location>
        <begin position="1"/>
        <end position="693"/>
    </location>
</feature>
<feature type="domain" description="4Fe-4S ferredoxin-type 1" evidence="1">
    <location>
        <begin position="368"/>
        <end position="397"/>
    </location>
</feature>
<feature type="domain" description="4Fe-4S ferredoxin-type 2" evidence="1">
    <location>
        <begin position="407"/>
        <end position="436"/>
    </location>
</feature>
<feature type="region of interest" description="Disordered" evidence="2">
    <location>
        <begin position="539"/>
        <end position="564"/>
    </location>
</feature>
<feature type="compositionally biased region" description="Basic and acidic residues" evidence="2">
    <location>
        <begin position="539"/>
        <end position="548"/>
    </location>
</feature>
<feature type="binding site" evidence="1">
    <location>
        <position position="377"/>
    </location>
    <ligand>
        <name>[4Fe-4S] cluster</name>
        <dbReference type="ChEBI" id="CHEBI:49883"/>
        <label>1</label>
    </ligand>
</feature>
<feature type="binding site" evidence="1">
    <location>
        <position position="380"/>
    </location>
    <ligand>
        <name>[4Fe-4S] cluster</name>
        <dbReference type="ChEBI" id="CHEBI:49883"/>
        <label>1</label>
    </ligand>
</feature>
<feature type="binding site" evidence="1">
    <location>
        <position position="383"/>
    </location>
    <ligand>
        <name>[4Fe-4S] cluster</name>
        <dbReference type="ChEBI" id="CHEBI:49883"/>
        <label>1</label>
    </ligand>
</feature>
<feature type="binding site" evidence="1">
    <location>
        <position position="387"/>
    </location>
    <ligand>
        <name>[4Fe-4S] cluster</name>
        <dbReference type="ChEBI" id="CHEBI:49883"/>
        <label>2</label>
    </ligand>
</feature>
<feature type="binding site" evidence="1">
    <location>
        <position position="416"/>
    </location>
    <ligand>
        <name>[4Fe-4S] cluster</name>
        <dbReference type="ChEBI" id="CHEBI:49883"/>
        <label>2</label>
    </ligand>
</feature>
<feature type="binding site" evidence="1">
    <location>
        <position position="419"/>
    </location>
    <ligand>
        <name>[4Fe-4S] cluster</name>
        <dbReference type="ChEBI" id="CHEBI:49883"/>
        <label>2</label>
    </ligand>
</feature>
<feature type="binding site" evidence="1">
    <location>
        <position position="422"/>
    </location>
    <ligand>
        <name>[4Fe-4S] cluster</name>
        <dbReference type="ChEBI" id="CHEBI:49883"/>
        <label>2</label>
    </ligand>
</feature>
<feature type="binding site" evidence="1">
    <location>
        <position position="426"/>
    </location>
    <ligand>
        <name>[4Fe-4S] cluster</name>
        <dbReference type="ChEBI" id="CHEBI:49883"/>
        <label>1</label>
    </ligand>
</feature>
<keyword id="KW-0004">4Fe-4S</keyword>
<keyword id="KW-0997">Cell inner membrane</keyword>
<keyword id="KW-1003">Cell membrane</keyword>
<keyword id="KW-0249">Electron transport</keyword>
<keyword id="KW-0408">Iron</keyword>
<keyword id="KW-0411">Iron-sulfur</keyword>
<keyword id="KW-0472">Membrane</keyword>
<keyword id="KW-0479">Metal-binding</keyword>
<keyword id="KW-1185">Reference proteome</keyword>
<keyword id="KW-0677">Repeat</keyword>
<keyword id="KW-1278">Translocase</keyword>
<keyword id="KW-0813">Transport</keyword>
<accession>Q6D4W2</accession>
<organism>
    <name type="scientific">Pectobacterium atrosepticum (strain SCRI 1043 / ATCC BAA-672)</name>
    <name type="common">Erwinia carotovora subsp. atroseptica</name>
    <dbReference type="NCBI Taxonomy" id="218491"/>
    <lineage>
        <taxon>Bacteria</taxon>
        <taxon>Pseudomonadati</taxon>
        <taxon>Pseudomonadota</taxon>
        <taxon>Gammaproteobacteria</taxon>
        <taxon>Enterobacterales</taxon>
        <taxon>Pectobacteriaceae</taxon>
        <taxon>Pectobacterium</taxon>
    </lineage>
</organism>
<reference key="1">
    <citation type="journal article" date="2004" name="Proc. Natl. Acad. Sci. U.S.A.">
        <title>Genome sequence of the enterobacterial phytopathogen Erwinia carotovora subsp. atroseptica and characterization of virulence factors.</title>
        <authorList>
            <person name="Bell K.S."/>
            <person name="Sebaihia M."/>
            <person name="Pritchard L."/>
            <person name="Holden M.T.G."/>
            <person name="Hyman L.J."/>
            <person name="Holeva M.C."/>
            <person name="Thomson N.R."/>
            <person name="Bentley S.D."/>
            <person name="Churcher L.J.C."/>
            <person name="Mungall K."/>
            <person name="Atkin R."/>
            <person name="Bason N."/>
            <person name="Brooks K."/>
            <person name="Chillingworth T."/>
            <person name="Clark K."/>
            <person name="Doggett J."/>
            <person name="Fraser A."/>
            <person name="Hance Z."/>
            <person name="Hauser H."/>
            <person name="Jagels K."/>
            <person name="Moule S."/>
            <person name="Norbertczak H."/>
            <person name="Ormond D."/>
            <person name="Price C."/>
            <person name="Quail M.A."/>
            <person name="Sanders M."/>
            <person name="Walker D."/>
            <person name="Whitehead S."/>
            <person name="Salmond G.P.C."/>
            <person name="Birch P.R.J."/>
            <person name="Parkhill J."/>
            <person name="Toth I.K."/>
        </authorList>
    </citation>
    <scope>NUCLEOTIDE SEQUENCE [LARGE SCALE GENOMIC DNA]</scope>
    <source>
        <strain>SCRI 1043 / ATCC BAA-672</strain>
    </source>
</reference>
<comment type="function">
    <text evidence="1">Part of a membrane-bound complex that couples electron transfer with translocation of ions across the membrane.</text>
</comment>
<comment type="cofactor">
    <cofactor evidence="1">
        <name>[4Fe-4S] cluster</name>
        <dbReference type="ChEBI" id="CHEBI:49883"/>
    </cofactor>
    <text evidence="1">Binds 2 [4Fe-4S] clusters per subunit.</text>
</comment>
<comment type="subunit">
    <text evidence="1">The complex is composed of six subunits: RnfA, RnfB, RnfC, RnfD, RnfE and RnfG.</text>
</comment>
<comment type="subcellular location">
    <subcellularLocation>
        <location evidence="1">Cell inner membrane</location>
        <topology evidence="1">Peripheral membrane protein</topology>
    </subcellularLocation>
</comment>
<comment type="similarity">
    <text evidence="1">Belongs to the 4Fe4S bacterial-type ferredoxin family. RnfC subfamily.</text>
</comment>
<protein>
    <recommendedName>
        <fullName evidence="1">Ion-translocating oxidoreductase complex subunit C</fullName>
        <ecNumber evidence="1">7.-.-.-</ecNumber>
    </recommendedName>
    <alternativeName>
        <fullName evidence="1">Rnf electron transport complex subunit C</fullName>
    </alternativeName>
</protein>
<proteinExistence type="inferred from homology"/>
<name>RNFC_PECAS</name>
<dbReference type="EC" id="7.-.-.-" evidence="1"/>
<dbReference type="EMBL" id="BX950851">
    <property type="protein sequence ID" value="CAG75181.1"/>
    <property type="molecule type" value="Genomic_DNA"/>
</dbReference>
<dbReference type="SMR" id="Q6D4W2"/>
<dbReference type="STRING" id="218491.ECA2278"/>
<dbReference type="KEGG" id="eca:ECA2278"/>
<dbReference type="PATRIC" id="fig|218491.5.peg.2308"/>
<dbReference type="eggNOG" id="COG4656">
    <property type="taxonomic scope" value="Bacteria"/>
</dbReference>
<dbReference type="HOGENOM" id="CLU_010808_2_1_6"/>
<dbReference type="OrthoDB" id="9767754at2"/>
<dbReference type="Proteomes" id="UP000007966">
    <property type="component" value="Chromosome"/>
</dbReference>
<dbReference type="GO" id="GO:0005886">
    <property type="term" value="C:plasma membrane"/>
    <property type="evidence" value="ECO:0007669"/>
    <property type="project" value="UniProtKB-SubCell"/>
</dbReference>
<dbReference type="GO" id="GO:0051539">
    <property type="term" value="F:4 iron, 4 sulfur cluster binding"/>
    <property type="evidence" value="ECO:0007669"/>
    <property type="project" value="UniProtKB-KW"/>
</dbReference>
<dbReference type="GO" id="GO:0009055">
    <property type="term" value="F:electron transfer activity"/>
    <property type="evidence" value="ECO:0007669"/>
    <property type="project" value="InterPro"/>
</dbReference>
<dbReference type="GO" id="GO:0046872">
    <property type="term" value="F:metal ion binding"/>
    <property type="evidence" value="ECO:0007669"/>
    <property type="project" value="UniProtKB-KW"/>
</dbReference>
<dbReference type="GO" id="GO:0022900">
    <property type="term" value="P:electron transport chain"/>
    <property type="evidence" value="ECO:0007669"/>
    <property type="project" value="UniProtKB-UniRule"/>
</dbReference>
<dbReference type="Gene3D" id="3.30.70.20">
    <property type="match status" value="1"/>
</dbReference>
<dbReference type="Gene3D" id="3.40.50.11540">
    <property type="entry name" value="NADH-ubiquinone oxidoreductase 51kDa subunit"/>
    <property type="match status" value="1"/>
</dbReference>
<dbReference type="HAMAP" id="MF_00461">
    <property type="entry name" value="RsxC_RnfC"/>
    <property type="match status" value="1"/>
</dbReference>
<dbReference type="InterPro" id="IPR017896">
    <property type="entry name" value="4Fe4S_Fe-S-bd"/>
</dbReference>
<dbReference type="InterPro" id="IPR017900">
    <property type="entry name" value="4Fe4S_Fe_S_CS"/>
</dbReference>
<dbReference type="InterPro" id="IPR010208">
    <property type="entry name" value="Ion_transpt_RnfC/RsxC"/>
</dbReference>
<dbReference type="InterPro" id="IPR011538">
    <property type="entry name" value="Nuo51_FMN-bd"/>
</dbReference>
<dbReference type="InterPro" id="IPR037225">
    <property type="entry name" value="Nuo51_FMN-bd_sf"/>
</dbReference>
<dbReference type="InterPro" id="IPR026902">
    <property type="entry name" value="RnfC_N"/>
</dbReference>
<dbReference type="InterPro" id="IPR019554">
    <property type="entry name" value="Soluble_ligand-bd"/>
</dbReference>
<dbReference type="NCBIfam" id="NF003454">
    <property type="entry name" value="PRK05035.1"/>
    <property type="match status" value="1"/>
</dbReference>
<dbReference type="NCBIfam" id="TIGR01945">
    <property type="entry name" value="rnfC"/>
    <property type="match status" value="1"/>
</dbReference>
<dbReference type="PANTHER" id="PTHR43034">
    <property type="entry name" value="ION-TRANSLOCATING OXIDOREDUCTASE COMPLEX SUBUNIT C"/>
    <property type="match status" value="1"/>
</dbReference>
<dbReference type="PANTHER" id="PTHR43034:SF2">
    <property type="entry name" value="ION-TRANSLOCATING OXIDOREDUCTASE COMPLEX SUBUNIT C"/>
    <property type="match status" value="1"/>
</dbReference>
<dbReference type="Pfam" id="PF01512">
    <property type="entry name" value="Complex1_51K"/>
    <property type="match status" value="1"/>
</dbReference>
<dbReference type="Pfam" id="PF12838">
    <property type="entry name" value="Fer4_7"/>
    <property type="match status" value="1"/>
</dbReference>
<dbReference type="Pfam" id="PF13375">
    <property type="entry name" value="RnfC_N"/>
    <property type="match status" value="1"/>
</dbReference>
<dbReference type="Pfam" id="PF10531">
    <property type="entry name" value="SLBB"/>
    <property type="match status" value="1"/>
</dbReference>
<dbReference type="SUPFAM" id="SSF46548">
    <property type="entry name" value="alpha-helical ferredoxin"/>
    <property type="match status" value="1"/>
</dbReference>
<dbReference type="SUPFAM" id="SSF142019">
    <property type="entry name" value="Nqo1 FMN-binding domain-like"/>
    <property type="match status" value="1"/>
</dbReference>
<dbReference type="PROSITE" id="PS00198">
    <property type="entry name" value="4FE4S_FER_1"/>
    <property type="match status" value="2"/>
</dbReference>
<dbReference type="PROSITE" id="PS51379">
    <property type="entry name" value="4FE4S_FER_2"/>
    <property type="match status" value="2"/>
</dbReference>
<evidence type="ECO:0000255" key="1">
    <source>
        <dbReference type="HAMAP-Rule" id="MF_00461"/>
    </source>
</evidence>
<evidence type="ECO:0000256" key="2">
    <source>
        <dbReference type="SAM" id="MobiDB-lite"/>
    </source>
</evidence>